<organism>
    <name type="scientific">Gloeothece citriformis (strain PCC 7424)</name>
    <name type="common">Cyanothece sp. (strain PCC 7424)</name>
    <dbReference type="NCBI Taxonomy" id="65393"/>
    <lineage>
        <taxon>Bacteria</taxon>
        <taxon>Bacillati</taxon>
        <taxon>Cyanobacteriota</taxon>
        <taxon>Cyanophyceae</taxon>
        <taxon>Oscillatoriophycideae</taxon>
        <taxon>Chroococcales</taxon>
        <taxon>Aphanothecaceae</taxon>
        <taxon>Gloeothece</taxon>
        <taxon>Gloeothece citriformis</taxon>
    </lineage>
</organism>
<keyword id="KW-0328">Glycosyltransferase</keyword>
<keyword id="KW-0441">Lipid A biosynthesis</keyword>
<keyword id="KW-0444">Lipid biosynthesis</keyword>
<keyword id="KW-0443">Lipid metabolism</keyword>
<keyword id="KW-1185">Reference proteome</keyword>
<keyword id="KW-0808">Transferase</keyword>
<accession>B7KFS1</accession>
<name>LPXB_GLOC7</name>
<gene>
    <name evidence="1" type="primary">lpxB</name>
    <name type="ordered locus">PCC7424_5044</name>
</gene>
<sequence length="384" mass="42842">MRIFISTGEVSGDLQGAMLIEALKRQAALKAMDLEIVALGGDRMAETGVSLLGKTPKIASIGLIEALPFIMPTWKLQRKAKQYLQENPPDLLILIDYCGPNVAIGKYARKNIPQVPILYYIAPQAWVWTTNKKTTQDLVNITDHLLAIFSEEARYFAQKGMSVSWVGHPILDRMAQAPTREEARQKLGIKPDQTAIALLPVSRKQELKYLLPVVCQAAQQIQEKLPDVQFLIPLALEDYRSTISAMMEEYGLQGTILDGKSLDALAAADLAIAKSGTVNLELALLNVPQVVVYRLTPLTLWIAQNILKFSVPFLSPVNLVVMEEVVPELFQERATPEQIVQESLDLLLNPQRRQKTLSDYQRVREELGEVGVCDRAAQEILDYV</sequence>
<feature type="chain" id="PRO_1000191472" description="Lipid-A-disaccharide synthase">
    <location>
        <begin position="1"/>
        <end position="384"/>
    </location>
</feature>
<comment type="function">
    <text evidence="1">Condensation of UDP-2,3-diacylglucosamine and 2,3-diacylglucosamine-1-phosphate to form lipid A disaccharide, a precursor of lipid A, a phosphorylated glycolipid that anchors the lipopolysaccharide to the outer membrane of the cell.</text>
</comment>
<comment type="catalytic activity">
    <reaction evidence="1">
        <text>a lipid X + a UDP-2-N,3-O-bis[(3R)-3-hydroxyacyl]-alpha-D-glucosamine = a lipid A disaccharide + UDP + H(+)</text>
        <dbReference type="Rhea" id="RHEA:67828"/>
        <dbReference type="ChEBI" id="CHEBI:15378"/>
        <dbReference type="ChEBI" id="CHEBI:58223"/>
        <dbReference type="ChEBI" id="CHEBI:137748"/>
        <dbReference type="ChEBI" id="CHEBI:176338"/>
        <dbReference type="ChEBI" id="CHEBI:176343"/>
        <dbReference type="EC" id="2.4.1.182"/>
    </reaction>
</comment>
<comment type="pathway">
    <text evidence="1">Bacterial outer membrane biogenesis; LPS lipid A biosynthesis.</text>
</comment>
<comment type="similarity">
    <text evidence="1">Belongs to the LpxB family.</text>
</comment>
<dbReference type="EC" id="2.4.1.182" evidence="1"/>
<dbReference type="EMBL" id="CP001291">
    <property type="protein sequence ID" value="ACK73396.1"/>
    <property type="molecule type" value="Genomic_DNA"/>
</dbReference>
<dbReference type="RefSeq" id="WP_015956976.1">
    <property type="nucleotide sequence ID" value="NC_011729.1"/>
</dbReference>
<dbReference type="SMR" id="B7KFS1"/>
<dbReference type="STRING" id="65393.PCC7424_5044"/>
<dbReference type="CAZy" id="GT19">
    <property type="family name" value="Glycosyltransferase Family 19"/>
</dbReference>
<dbReference type="KEGG" id="cyc:PCC7424_5044"/>
<dbReference type="eggNOG" id="COG0763">
    <property type="taxonomic scope" value="Bacteria"/>
</dbReference>
<dbReference type="HOGENOM" id="CLU_036577_3_0_3"/>
<dbReference type="OrthoDB" id="9801642at2"/>
<dbReference type="UniPathway" id="UPA00973"/>
<dbReference type="Proteomes" id="UP000002384">
    <property type="component" value="Chromosome"/>
</dbReference>
<dbReference type="GO" id="GO:0016020">
    <property type="term" value="C:membrane"/>
    <property type="evidence" value="ECO:0007669"/>
    <property type="project" value="GOC"/>
</dbReference>
<dbReference type="GO" id="GO:0008915">
    <property type="term" value="F:lipid-A-disaccharide synthase activity"/>
    <property type="evidence" value="ECO:0007669"/>
    <property type="project" value="UniProtKB-UniRule"/>
</dbReference>
<dbReference type="GO" id="GO:0005543">
    <property type="term" value="F:phospholipid binding"/>
    <property type="evidence" value="ECO:0007669"/>
    <property type="project" value="TreeGrafter"/>
</dbReference>
<dbReference type="GO" id="GO:0009245">
    <property type="term" value="P:lipid A biosynthetic process"/>
    <property type="evidence" value="ECO:0007669"/>
    <property type="project" value="UniProtKB-UniRule"/>
</dbReference>
<dbReference type="HAMAP" id="MF_00392">
    <property type="entry name" value="LpxB"/>
    <property type="match status" value="1"/>
</dbReference>
<dbReference type="InterPro" id="IPR003835">
    <property type="entry name" value="Glyco_trans_19"/>
</dbReference>
<dbReference type="NCBIfam" id="TIGR00215">
    <property type="entry name" value="lpxB"/>
    <property type="match status" value="1"/>
</dbReference>
<dbReference type="PANTHER" id="PTHR30372">
    <property type="entry name" value="LIPID-A-DISACCHARIDE SYNTHASE"/>
    <property type="match status" value="1"/>
</dbReference>
<dbReference type="PANTHER" id="PTHR30372:SF4">
    <property type="entry name" value="LIPID-A-DISACCHARIDE SYNTHASE, MITOCHONDRIAL-RELATED"/>
    <property type="match status" value="1"/>
</dbReference>
<dbReference type="Pfam" id="PF02684">
    <property type="entry name" value="LpxB"/>
    <property type="match status" value="1"/>
</dbReference>
<dbReference type="SUPFAM" id="SSF53756">
    <property type="entry name" value="UDP-Glycosyltransferase/glycogen phosphorylase"/>
    <property type="match status" value="1"/>
</dbReference>
<reference key="1">
    <citation type="journal article" date="2011" name="MBio">
        <title>Novel metabolic attributes of the genus Cyanothece, comprising a group of unicellular nitrogen-fixing Cyanobacteria.</title>
        <authorList>
            <person name="Bandyopadhyay A."/>
            <person name="Elvitigala T."/>
            <person name="Welsh E."/>
            <person name="Stockel J."/>
            <person name="Liberton M."/>
            <person name="Min H."/>
            <person name="Sherman L.A."/>
            <person name="Pakrasi H.B."/>
        </authorList>
    </citation>
    <scope>NUCLEOTIDE SEQUENCE [LARGE SCALE GENOMIC DNA]</scope>
    <source>
        <strain>PCC 7424</strain>
    </source>
</reference>
<evidence type="ECO:0000255" key="1">
    <source>
        <dbReference type="HAMAP-Rule" id="MF_00392"/>
    </source>
</evidence>
<protein>
    <recommendedName>
        <fullName evidence="1">Lipid-A-disaccharide synthase</fullName>
        <ecNumber evidence="1">2.4.1.182</ecNumber>
    </recommendedName>
</protein>
<proteinExistence type="inferred from homology"/>